<comment type="function">
    <text evidence="1">Fluoride-specific ion channel. Important for reducing fluoride concentration in the cell, thus reducing its toxicity.</text>
</comment>
<comment type="catalytic activity">
    <reaction evidence="1">
        <text>fluoride(in) = fluoride(out)</text>
        <dbReference type="Rhea" id="RHEA:76159"/>
        <dbReference type="ChEBI" id="CHEBI:17051"/>
    </reaction>
    <physiologicalReaction direction="left-to-right" evidence="1">
        <dbReference type="Rhea" id="RHEA:76160"/>
    </physiologicalReaction>
</comment>
<comment type="activity regulation">
    <text evidence="1">Na(+) is not transported, but it plays an essential structural role and its presence is essential for fluoride channel function.</text>
</comment>
<comment type="subcellular location">
    <subcellularLocation>
        <location evidence="1">Cell inner membrane</location>
        <topology evidence="1">Multi-pass membrane protein</topology>
    </subcellularLocation>
</comment>
<comment type="similarity">
    <text evidence="1">Belongs to the fluoride channel Fluc/FEX (TC 1.A.43) family.</text>
</comment>
<organism>
    <name type="scientific">Parabacteroides distasonis (strain ATCC 8503 / DSM 20701 / CIP 104284 / JCM 5825 / NCTC 11152)</name>
    <dbReference type="NCBI Taxonomy" id="435591"/>
    <lineage>
        <taxon>Bacteria</taxon>
        <taxon>Pseudomonadati</taxon>
        <taxon>Bacteroidota</taxon>
        <taxon>Bacteroidia</taxon>
        <taxon>Bacteroidales</taxon>
        <taxon>Tannerellaceae</taxon>
        <taxon>Parabacteroides</taxon>
    </lineage>
</organism>
<sequence length="128" mass="14016">MIKVFLLIIGGAIGSALRFGVSTWMQRSMLYSFPFGILSVNVIGSFLIGFCWSIAEAYNFSINTRAFLFTGLFGGFTTFSSFALDTMVLMRTGEYKMALLNVLASNILGLIAVFLGIILGKNIITMIK</sequence>
<reference key="1">
    <citation type="journal article" date="2007" name="PLoS Biol.">
        <title>Evolution of symbiotic bacteria in the distal human intestine.</title>
        <authorList>
            <person name="Xu J."/>
            <person name="Mahowald M.A."/>
            <person name="Ley R.E."/>
            <person name="Lozupone C.A."/>
            <person name="Hamady M."/>
            <person name="Martens E.C."/>
            <person name="Henrissat B."/>
            <person name="Coutinho P.M."/>
            <person name="Minx P."/>
            <person name="Latreille P."/>
            <person name="Cordum H."/>
            <person name="Van Brunt A."/>
            <person name="Kim K."/>
            <person name="Fulton R.S."/>
            <person name="Fulton L.A."/>
            <person name="Clifton S.W."/>
            <person name="Wilson R.K."/>
            <person name="Knight R.D."/>
            <person name="Gordon J.I."/>
        </authorList>
    </citation>
    <scope>NUCLEOTIDE SEQUENCE [LARGE SCALE GENOMIC DNA]</scope>
    <source>
        <strain>ATCC 8503 / DSM 20701 / CIP 104284 / JCM 5825 / NCTC 11152</strain>
    </source>
</reference>
<name>FLUC_PARD8</name>
<gene>
    <name evidence="1" type="primary">fluC</name>
    <name evidence="1" type="synonym">crcB</name>
    <name type="ordered locus">BDI_0835</name>
</gene>
<accession>A6LA91</accession>
<protein>
    <recommendedName>
        <fullName evidence="1">Fluoride-specific ion channel FluC</fullName>
    </recommendedName>
</protein>
<dbReference type="EMBL" id="CP000140">
    <property type="protein sequence ID" value="ABR42605.1"/>
    <property type="molecule type" value="Genomic_DNA"/>
</dbReference>
<dbReference type="RefSeq" id="WP_011966181.1">
    <property type="nucleotide sequence ID" value="NC_009615.1"/>
</dbReference>
<dbReference type="SMR" id="A6LA91"/>
<dbReference type="STRING" id="435591.BDI_0835"/>
<dbReference type="PaxDb" id="435591-BDI_0835"/>
<dbReference type="KEGG" id="pdi:BDI_0835"/>
<dbReference type="PATRIC" id="fig|435591.13.peg.816"/>
<dbReference type="eggNOG" id="COG0239">
    <property type="taxonomic scope" value="Bacteria"/>
</dbReference>
<dbReference type="HOGENOM" id="CLU_114342_2_3_10"/>
<dbReference type="BioCyc" id="PDIS435591:G1G5A-855-MONOMER"/>
<dbReference type="Proteomes" id="UP000000566">
    <property type="component" value="Chromosome"/>
</dbReference>
<dbReference type="GO" id="GO:0005886">
    <property type="term" value="C:plasma membrane"/>
    <property type="evidence" value="ECO:0007669"/>
    <property type="project" value="UniProtKB-SubCell"/>
</dbReference>
<dbReference type="GO" id="GO:0062054">
    <property type="term" value="F:fluoride channel activity"/>
    <property type="evidence" value="ECO:0007669"/>
    <property type="project" value="UniProtKB-UniRule"/>
</dbReference>
<dbReference type="GO" id="GO:0046872">
    <property type="term" value="F:metal ion binding"/>
    <property type="evidence" value="ECO:0007669"/>
    <property type="project" value="UniProtKB-KW"/>
</dbReference>
<dbReference type="GO" id="GO:0140114">
    <property type="term" value="P:cellular detoxification of fluoride"/>
    <property type="evidence" value="ECO:0007669"/>
    <property type="project" value="UniProtKB-UniRule"/>
</dbReference>
<dbReference type="HAMAP" id="MF_00454">
    <property type="entry name" value="FluC"/>
    <property type="match status" value="1"/>
</dbReference>
<dbReference type="InterPro" id="IPR003691">
    <property type="entry name" value="FluC"/>
</dbReference>
<dbReference type="NCBIfam" id="TIGR00494">
    <property type="entry name" value="crcB"/>
    <property type="match status" value="1"/>
</dbReference>
<dbReference type="PANTHER" id="PTHR28259">
    <property type="entry name" value="FLUORIDE EXPORT PROTEIN 1-RELATED"/>
    <property type="match status" value="1"/>
</dbReference>
<dbReference type="PANTHER" id="PTHR28259:SF1">
    <property type="entry name" value="FLUORIDE EXPORT PROTEIN 1-RELATED"/>
    <property type="match status" value="1"/>
</dbReference>
<dbReference type="Pfam" id="PF02537">
    <property type="entry name" value="CRCB"/>
    <property type="match status" value="1"/>
</dbReference>
<proteinExistence type="inferred from homology"/>
<keyword id="KW-0997">Cell inner membrane</keyword>
<keyword id="KW-1003">Cell membrane</keyword>
<keyword id="KW-0407">Ion channel</keyword>
<keyword id="KW-0406">Ion transport</keyword>
<keyword id="KW-0472">Membrane</keyword>
<keyword id="KW-0479">Metal-binding</keyword>
<keyword id="KW-1185">Reference proteome</keyword>
<keyword id="KW-0915">Sodium</keyword>
<keyword id="KW-0812">Transmembrane</keyword>
<keyword id="KW-1133">Transmembrane helix</keyword>
<keyword id="KW-0813">Transport</keyword>
<feature type="chain" id="PRO_1000026404" description="Fluoride-specific ion channel FluC">
    <location>
        <begin position="1"/>
        <end position="128"/>
    </location>
</feature>
<feature type="transmembrane region" description="Helical" evidence="1">
    <location>
        <begin position="4"/>
        <end position="24"/>
    </location>
</feature>
<feature type="transmembrane region" description="Helical" evidence="1">
    <location>
        <begin position="35"/>
        <end position="55"/>
    </location>
</feature>
<feature type="transmembrane region" description="Helical" evidence="1">
    <location>
        <begin position="67"/>
        <end position="87"/>
    </location>
</feature>
<feature type="transmembrane region" description="Helical" evidence="1">
    <location>
        <begin position="99"/>
        <end position="119"/>
    </location>
</feature>
<feature type="binding site" evidence="1">
    <location>
        <position position="74"/>
    </location>
    <ligand>
        <name>Na(+)</name>
        <dbReference type="ChEBI" id="CHEBI:29101"/>
        <note>structural</note>
    </ligand>
</feature>
<feature type="binding site" evidence="1">
    <location>
        <position position="77"/>
    </location>
    <ligand>
        <name>Na(+)</name>
        <dbReference type="ChEBI" id="CHEBI:29101"/>
        <note>structural</note>
    </ligand>
</feature>
<evidence type="ECO:0000255" key="1">
    <source>
        <dbReference type="HAMAP-Rule" id="MF_00454"/>
    </source>
</evidence>